<feature type="chain" id="PRO_0000360670" description="Putative acetyl-CoA C-acetyltransferase YhfS">
    <location>
        <begin position="1"/>
        <end position="364"/>
    </location>
</feature>
<feature type="active site" description="Acyl-thioester intermediate" evidence="1">
    <location>
        <position position="82"/>
    </location>
</feature>
<feature type="active site" description="Proton acceptor" evidence="1">
    <location>
        <position position="318"/>
    </location>
</feature>
<comment type="function">
    <text>May be involved in fatty acid metabolism.</text>
</comment>
<comment type="induction">
    <text evidence="2">Repressed by presence of biotin, under control of BirA. Probably part of the bioY-yhfST operon.</text>
</comment>
<comment type="similarity">
    <text evidence="3">Belongs to the thiolase-like superfamily. Thiolase family.</text>
</comment>
<evidence type="ECO:0000250" key="1"/>
<evidence type="ECO:0000269" key="2">
    <source>
    </source>
</evidence>
<evidence type="ECO:0000305" key="3"/>
<accession>O07618</accession>
<accession>Q796T4</accession>
<name>YHFS_BACSU</name>
<proteinExistence type="evidence at transcript level"/>
<gene>
    <name type="primary">yhfS</name>
    <name type="ordered locus">BSU10350</name>
</gene>
<sequence length="364" mass="38399">MNAVIVDAKRTIFGNQNGLLKPFLPEDLAAPIIRCLSRKLEDQVDEVILGNATGRGGNLARLSALQAGLPLSVPGMTIDRQCGSGLEAVRYACSLIQAGAGTMYIAGGSESSSQSPFSERARFSPDAIGDPDMGIAAEYTAARYSISRSMQDEYALLSHQRSRNAHDEGFYREEVVALGELETDEAFLKTRPIEAIIPRAKPVFDTSSGTVTAANSSGIADGAAALLVMEEEKAAALGLKPVLRFIGSAVSGIHPNFPPAAPVVAIRQLLHTHDVTPDDIDLFEINEAFAVKICVCSQELGIPFSKINVRGGALALGHPYGASGAALVTRLFYEAKRRPDCQYAVAAIGSGGGIGLALLFEVLA</sequence>
<protein>
    <recommendedName>
        <fullName>Putative acetyl-CoA C-acetyltransferase YhfS</fullName>
        <ecNumber>2.3.1.-</ecNumber>
    </recommendedName>
</protein>
<keyword id="KW-0012">Acyltransferase</keyword>
<keyword id="KW-1185">Reference proteome</keyword>
<keyword id="KW-0808">Transferase</keyword>
<reference key="1">
    <citation type="journal article" date="1998" name="Microbiology">
        <title>The 172 kb prkA-addAB region from 83 degrees to 97 degrees of the Bacillus subtilis chromosome contains several dysfunctional genes, the glyB marker, many genes encoding transporter proteins, and the ubiquitous hit gene.</title>
        <authorList>
            <person name="Noback M.A."/>
            <person name="Holsappel S."/>
            <person name="Kiewiet R."/>
            <person name="Terpstra P."/>
            <person name="Wambutt R."/>
            <person name="Wedler H."/>
            <person name="Venema G."/>
            <person name="Bron S."/>
        </authorList>
    </citation>
    <scope>NUCLEOTIDE SEQUENCE [GENOMIC DNA]</scope>
    <source>
        <strain>168</strain>
    </source>
</reference>
<reference key="2">
    <citation type="journal article" date="1997" name="Nature">
        <title>The complete genome sequence of the Gram-positive bacterium Bacillus subtilis.</title>
        <authorList>
            <person name="Kunst F."/>
            <person name="Ogasawara N."/>
            <person name="Moszer I."/>
            <person name="Albertini A.M."/>
            <person name="Alloni G."/>
            <person name="Azevedo V."/>
            <person name="Bertero M.G."/>
            <person name="Bessieres P."/>
            <person name="Bolotin A."/>
            <person name="Borchert S."/>
            <person name="Borriss R."/>
            <person name="Boursier L."/>
            <person name="Brans A."/>
            <person name="Braun M."/>
            <person name="Brignell S.C."/>
            <person name="Bron S."/>
            <person name="Brouillet S."/>
            <person name="Bruschi C.V."/>
            <person name="Caldwell B."/>
            <person name="Capuano V."/>
            <person name="Carter N.M."/>
            <person name="Choi S.-K."/>
            <person name="Codani J.-J."/>
            <person name="Connerton I.F."/>
            <person name="Cummings N.J."/>
            <person name="Daniel R.A."/>
            <person name="Denizot F."/>
            <person name="Devine K.M."/>
            <person name="Duesterhoeft A."/>
            <person name="Ehrlich S.D."/>
            <person name="Emmerson P.T."/>
            <person name="Entian K.-D."/>
            <person name="Errington J."/>
            <person name="Fabret C."/>
            <person name="Ferrari E."/>
            <person name="Foulger D."/>
            <person name="Fritz C."/>
            <person name="Fujita M."/>
            <person name="Fujita Y."/>
            <person name="Fuma S."/>
            <person name="Galizzi A."/>
            <person name="Galleron N."/>
            <person name="Ghim S.-Y."/>
            <person name="Glaser P."/>
            <person name="Goffeau A."/>
            <person name="Golightly E.J."/>
            <person name="Grandi G."/>
            <person name="Guiseppi G."/>
            <person name="Guy B.J."/>
            <person name="Haga K."/>
            <person name="Haiech J."/>
            <person name="Harwood C.R."/>
            <person name="Henaut A."/>
            <person name="Hilbert H."/>
            <person name="Holsappel S."/>
            <person name="Hosono S."/>
            <person name="Hullo M.-F."/>
            <person name="Itaya M."/>
            <person name="Jones L.-M."/>
            <person name="Joris B."/>
            <person name="Karamata D."/>
            <person name="Kasahara Y."/>
            <person name="Klaerr-Blanchard M."/>
            <person name="Klein C."/>
            <person name="Kobayashi Y."/>
            <person name="Koetter P."/>
            <person name="Koningstein G."/>
            <person name="Krogh S."/>
            <person name="Kumano M."/>
            <person name="Kurita K."/>
            <person name="Lapidus A."/>
            <person name="Lardinois S."/>
            <person name="Lauber J."/>
            <person name="Lazarevic V."/>
            <person name="Lee S.-M."/>
            <person name="Levine A."/>
            <person name="Liu H."/>
            <person name="Masuda S."/>
            <person name="Mauel C."/>
            <person name="Medigue C."/>
            <person name="Medina N."/>
            <person name="Mellado R.P."/>
            <person name="Mizuno M."/>
            <person name="Moestl D."/>
            <person name="Nakai S."/>
            <person name="Noback M."/>
            <person name="Noone D."/>
            <person name="O'Reilly M."/>
            <person name="Ogawa K."/>
            <person name="Ogiwara A."/>
            <person name="Oudega B."/>
            <person name="Park S.-H."/>
            <person name="Parro V."/>
            <person name="Pohl T.M."/>
            <person name="Portetelle D."/>
            <person name="Porwollik S."/>
            <person name="Prescott A.M."/>
            <person name="Presecan E."/>
            <person name="Pujic P."/>
            <person name="Purnelle B."/>
            <person name="Rapoport G."/>
            <person name="Rey M."/>
            <person name="Reynolds S."/>
            <person name="Rieger M."/>
            <person name="Rivolta C."/>
            <person name="Rocha E."/>
            <person name="Roche B."/>
            <person name="Rose M."/>
            <person name="Sadaie Y."/>
            <person name="Sato T."/>
            <person name="Scanlan E."/>
            <person name="Schleich S."/>
            <person name="Schroeter R."/>
            <person name="Scoffone F."/>
            <person name="Sekiguchi J."/>
            <person name="Sekowska A."/>
            <person name="Seror S.J."/>
            <person name="Serror P."/>
            <person name="Shin B.-S."/>
            <person name="Soldo B."/>
            <person name="Sorokin A."/>
            <person name="Tacconi E."/>
            <person name="Takagi T."/>
            <person name="Takahashi H."/>
            <person name="Takemaru K."/>
            <person name="Takeuchi M."/>
            <person name="Tamakoshi A."/>
            <person name="Tanaka T."/>
            <person name="Terpstra P."/>
            <person name="Tognoni A."/>
            <person name="Tosato V."/>
            <person name="Uchiyama S."/>
            <person name="Vandenbol M."/>
            <person name="Vannier F."/>
            <person name="Vassarotti A."/>
            <person name="Viari A."/>
            <person name="Wambutt R."/>
            <person name="Wedler E."/>
            <person name="Wedler H."/>
            <person name="Weitzenegger T."/>
            <person name="Winters P."/>
            <person name="Wipat A."/>
            <person name="Yamamoto H."/>
            <person name="Yamane K."/>
            <person name="Yasumoto K."/>
            <person name="Yata K."/>
            <person name="Yoshida K."/>
            <person name="Yoshikawa H.-F."/>
            <person name="Zumstein E."/>
            <person name="Yoshikawa H."/>
            <person name="Danchin A."/>
        </authorList>
    </citation>
    <scope>NUCLEOTIDE SEQUENCE [LARGE SCALE GENOMIC DNA]</scope>
    <source>
        <strain>168</strain>
    </source>
</reference>
<reference key="3">
    <citation type="journal article" date="2001" name="J. Bacteriol.">
        <title>RNA expression analysis using an antisense Bacillus subtilis genome array.</title>
        <authorList>
            <person name="Lee J.M."/>
            <person name="Zhang S."/>
            <person name="Saha S."/>
            <person name="Santa Anna S."/>
            <person name="Jiang C."/>
            <person name="Perkins J."/>
        </authorList>
    </citation>
    <scope>INDUCTION</scope>
    <scope>PROBABLE OPERON STRUCTURE</scope>
    <source>
        <strain>168 / PY79</strain>
    </source>
</reference>
<reference key="4">
    <citation type="journal article" date="2002" name="Genome Res.">
        <title>Conservation of the biotin regulon and the BirA regulatory signal in Eubacteria and Archaea.</title>
        <authorList>
            <person name="Rodionov D.A."/>
            <person name="Mironov A.A."/>
            <person name="Gelfand M.S."/>
        </authorList>
    </citation>
    <scope>DISCUSSION OF FUNCTION</scope>
</reference>
<organism>
    <name type="scientific">Bacillus subtilis (strain 168)</name>
    <dbReference type="NCBI Taxonomy" id="224308"/>
    <lineage>
        <taxon>Bacteria</taxon>
        <taxon>Bacillati</taxon>
        <taxon>Bacillota</taxon>
        <taxon>Bacilli</taxon>
        <taxon>Bacillales</taxon>
        <taxon>Bacillaceae</taxon>
        <taxon>Bacillus</taxon>
    </lineage>
</organism>
<dbReference type="EC" id="2.3.1.-"/>
<dbReference type="EMBL" id="Y14084">
    <property type="protein sequence ID" value="CAA74542.1"/>
    <property type="molecule type" value="Genomic_DNA"/>
</dbReference>
<dbReference type="EMBL" id="AL009126">
    <property type="protein sequence ID" value="CAB12875.1"/>
    <property type="molecule type" value="Genomic_DNA"/>
</dbReference>
<dbReference type="PIR" id="H69831">
    <property type="entry name" value="H69831"/>
</dbReference>
<dbReference type="RefSeq" id="NP_388916.1">
    <property type="nucleotide sequence ID" value="NC_000964.3"/>
</dbReference>
<dbReference type="RefSeq" id="WP_003233154.1">
    <property type="nucleotide sequence ID" value="NZ_OZ025638.1"/>
</dbReference>
<dbReference type="SMR" id="O07618"/>
<dbReference type="FunCoup" id="O07618">
    <property type="interactions" value="316"/>
</dbReference>
<dbReference type="STRING" id="224308.BSU10350"/>
<dbReference type="PaxDb" id="224308-BSU10350"/>
<dbReference type="EnsemblBacteria" id="CAB12875">
    <property type="protein sequence ID" value="CAB12875"/>
    <property type="gene ID" value="BSU_10350"/>
</dbReference>
<dbReference type="GeneID" id="939311"/>
<dbReference type="KEGG" id="bsu:BSU10350"/>
<dbReference type="PATRIC" id="fig|224308.179.peg.1113"/>
<dbReference type="eggNOG" id="COG0183">
    <property type="taxonomic scope" value="Bacteria"/>
</dbReference>
<dbReference type="InParanoid" id="O07618"/>
<dbReference type="OrthoDB" id="9764892at2"/>
<dbReference type="PhylomeDB" id="O07618"/>
<dbReference type="BioCyc" id="BSUB:BSU10350-MONOMER"/>
<dbReference type="Proteomes" id="UP000001570">
    <property type="component" value="Chromosome"/>
</dbReference>
<dbReference type="GO" id="GO:0005737">
    <property type="term" value="C:cytoplasm"/>
    <property type="evidence" value="ECO:0007669"/>
    <property type="project" value="UniProtKB-ARBA"/>
</dbReference>
<dbReference type="GO" id="GO:0003988">
    <property type="term" value="F:acetyl-CoA C-acyltransferase activity"/>
    <property type="evidence" value="ECO:0000318"/>
    <property type="project" value="GO_Central"/>
</dbReference>
<dbReference type="GO" id="GO:0006635">
    <property type="term" value="P:fatty acid beta-oxidation"/>
    <property type="evidence" value="ECO:0000318"/>
    <property type="project" value="GO_Central"/>
</dbReference>
<dbReference type="GO" id="GO:0010124">
    <property type="term" value="P:phenylacetate catabolic process"/>
    <property type="evidence" value="ECO:0000318"/>
    <property type="project" value="GO_Central"/>
</dbReference>
<dbReference type="CDD" id="cd00751">
    <property type="entry name" value="thiolase"/>
    <property type="match status" value="1"/>
</dbReference>
<dbReference type="Gene3D" id="3.40.47.10">
    <property type="match status" value="2"/>
</dbReference>
<dbReference type="InterPro" id="IPR002155">
    <property type="entry name" value="Thiolase"/>
</dbReference>
<dbReference type="InterPro" id="IPR016039">
    <property type="entry name" value="Thiolase-like"/>
</dbReference>
<dbReference type="InterPro" id="IPR050215">
    <property type="entry name" value="Thiolase-like_sf_Thiolase"/>
</dbReference>
<dbReference type="InterPro" id="IPR020617">
    <property type="entry name" value="Thiolase_C"/>
</dbReference>
<dbReference type="InterPro" id="IPR020613">
    <property type="entry name" value="Thiolase_CS"/>
</dbReference>
<dbReference type="InterPro" id="IPR020616">
    <property type="entry name" value="Thiolase_N"/>
</dbReference>
<dbReference type="NCBIfam" id="TIGR01930">
    <property type="entry name" value="AcCoA-C-Actrans"/>
    <property type="match status" value="1"/>
</dbReference>
<dbReference type="NCBIfam" id="NF005212">
    <property type="entry name" value="PRK06690.1"/>
    <property type="match status" value="1"/>
</dbReference>
<dbReference type="PANTHER" id="PTHR43853">
    <property type="entry name" value="3-KETOACYL-COA THIOLASE, PEROXISOMAL"/>
    <property type="match status" value="1"/>
</dbReference>
<dbReference type="PANTHER" id="PTHR43853:SF3">
    <property type="entry name" value="ACETYL-COA C-ACETYLTRANSFERASE YHFS-RELATED"/>
    <property type="match status" value="1"/>
</dbReference>
<dbReference type="Pfam" id="PF02803">
    <property type="entry name" value="Thiolase_C"/>
    <property type="match status" value="1"/>
</dbReference>
<dbReference type="Pfam" id="PF00108">
    <property type="entry name" value="Thiolase_N"/>
    <property type="match status" value="1"/>
</dbReference>
<dbReference type="PIRSF" id="PIRSF000429">
    <property type="entry name" value="Ac-CoA_Ac_transf"/>
    <property type="match status" value="1"/>
</dbReference>
<dbReference type="SUPFAM" id="SSF53901">
    <property type="entry name" value="Thiolase-like"/>
    <property type="match status" value="1"/>
</dbReference>
<dbReference type="PROSITE" id="PS00737">
    <property type="entry name" value="THIOLASE_2"/>
    <property type="match status" value="1"/>
</dbReference>